<dbReference type="EMBL" id="AL954747">
    <property type="protein sequence ID" value="CAD84121.1"/>
    <property type="molecule type" value="Genomic_DNA"/>
</dbReference>
<dbReference type="RefSeq" id="WP_011110855.1">
    <property type="nucleotide sequence ID" value="NC_004757.1"/>
</dbReference>
<dbReference type="SMR" id="Q82XP6"/>
<dbReference type="STRING" id="228410.NE0210"/>
<dbReference type="GeneID" id="87103417"/>
<dbReference type="KEGG" id="neu:NE0210"/>
<dbReference type="eggNOG" id="COG0217">
    <property type="taxonomic scope" value="Bacteria"/>
</dbReference>
<dbReference type="HOGENOM" id="CLU_062974_2_2_4"/>
<dbReference type="OrthoDB" id="9781053at2"/>
<dbReference type="PhylomeDB" id="Q82XP6"/>
<dbReference type="Proteomes" id="UP000001416">
    <property type="component" value="Chromosome"/>
</dbReference>
<dbReference type="GO" id="GO:0005829">
    <property type="term" value="C:cytosol"/>
    <property type="evidence" value="ECO:0007669"/>
    <property type="project" value="TreeGrafter"/>
</dbReference>
<dbReference type="GO" id="GO:0003677">
    <property type="term" value="F:DNA binding"/>
    <property type="evidence" value="ECO:0007669"/>
    <property type="project" value="UniProtKB-UniRule"/>
</dbReference>
<dbReference type="GO" id="GO:0006355">
    <property type="term" value="P:regulation of DNA-templated transcription"/>
    <property type="evidence" value="ECO:0007669"/>
    <property type="project" value="UniProtKB-UniRule"/>
</dbReference>
<dbReference type="FunFam" id="1.10.10.200:FF:000001">
    <property type="entry name" value="Probable transcriptional regulatory protein YebC"/>
    <property type="match status" value="1"/>
</dbReference>
<dbReference type="FunFam" id="3.30.70.980:FF:000002">
    <property type="entry name" value="Probable transcriptional regulatory protein YebC"/>
    <property type="match status" value="1"/>
</dbReference>
<dbReference type="Gene3D" id="1.10.10.200">
    <property type="match status" value="1"/>
</dbReference>
<dbReference type="Gene3D" id="3.30.70.980">
    <property type="match status" value="2"/>
</dbReference>
<dbReference type="HAMAP" id="MF_00693">
    <property type="entry name" value="Transcrip_reg_TACO1"/>
    <property type="match status" value="1"/>
</dbReference>
<dbReference type="InterPro" id="IPR017856">
    <property type="entry name" value="Integrase-like_N"/>
</dbReference>
<dbReference type="InterPro" id="IPR048300">
    <property type="entry name" value="TACO1_YebC-like_2nd/3rd_dom"/>
</dbReference>
<dbReference type="InterPro" id="IPR049083">
    <property type="entry name" value="TACO1_YebC_N"/>
</dbReference>
<dbReference type="InterPro" id="IPR002876">
    <property type="entry name" value="Transcrip_reg_TACO1-like"/>
</dbReference>
<dbReference type="InterPro" id="IPR026564">
    <property type="entry name" value="Transcrip_reg_TACO1-like_dom3"/>
</dbReference>
<dbReference type="InterPro" id="IPR029072">
    <property type="entry name" value="YebC-like"/>
</dbReference>
<dbReference type="NCBIfam" id="NF001030">
    <property type="entry name" value="PRK00110.1"/>
    <property type="match status" value="1"/>
</dbReference>
<dbReference type="NCBIfam" id="NF009044">
    <property type="entry name" value="PRK12378.1"/>
    <property type="match status" value="1"/>
</dbReference>
<dbReference type="NCBIfam" id="TIGR01033">
    <property type="entry name" value="YebC/PmpR family DNA-binding transcriptional regulator"/>
    <property type="match status" value="1"/>
</dbReference>
<dbReference type="PANTHER" id="PTHR12532:SF6">
    <property type="entry name" value="TRANSCRIPTIONAL REGULATORY PROTEIN YEBC-RELATED"/>
    <property type="match status" value="1"/>
</dbReference>
<dbReference type="PANTHER" id="PTHR12532">
    <property type="entry name" value="TRANSLATIONAL ACTIVATOR OF CYTOCHROME C OXIDASE 1"/>
    <property type="match status" value="1"/>
</dbReference>
<dbReference type="Pfam" id="PF20772">
    <property type="entry name" value="TACO1_YebC_N"/>
    <property type="match status" value="1"/>
</dbReference>
<dbReference type="Pfam" id="PF01709">
    <property type="entry name" value="Transcrip_reg"/>
    <property type="match status" value="1"/>
</dbReference>
<dbReference type="SUPFAM" id="SSF75625">
    <property type="entry name" value="YebC-like"/>
    <property type="match status" value="1"/>
</dbReference>
<organism>
    <name type="scientific">Nitrosomonas europaea (strain ATCC 19718 / CIP 103999 / KCTC 2705 / NBRC 14298)</name>
    <dbReference type="NCBI Taxonomy" id="228410"/>
    <lineage>
        <taxon>Bacteria</taxon>
        <taxon>Pseudomonadati</taxon>
        <taxon>Pseudomonadota</taxon>
        <taxon>Betaproteobacteria</taxon>
        <taxon>Nitrosomonadales</taxon>
        <taxon>Nitrosomonadaceae</taxon>
        <taxon>Nitrosomonas</taxon>
    </lineage>
</organism>
<feature type="chain" id="PRO_0000175857" description="Probable transcriptional regulatory protein NE0210">
    <location>
        <begin position="1"/>
        <end position="241"/>
    </location>
</feature>
<comment type="subcellular location">
    <subcellularLocation>
        <location evidence="1">Cytoplasm</location>
    </subcellularLocation>
</comment>
<comment type="similarity">
    <text evidence="1">Belongs to the TACO1 family.</text>
</comment>
<accession>Q82XP6</accession>
<protein>
    <recommendedName>
        <fullName evidence="1">Probable transcriptional regulatory protein NE0210</fullName>
    </recommendedName>
</protein>
<reference key="1">
    <citation type="journal article" date="2003" name="J. Bacteriol.">
        <title>Complete genome sequence of the ammonia-oxidizing bacterium and obligate chemolithoautotroph Nitrosomonas europaea.</title>
        <authorList>
            <person name="Chain P."/>
            <person name="Lamerdin J.E."/>
            <person name="Larimer F.W."/>
            <person name="Regala W."/>
            <person name="Lao V."/>
            <person name="Land M.L."/>
            <person name="Hauser L."/>
            <person name="Hooper A.B."/>
            <person name="Klotz M.G."/>
            <person name="Norton J."/>
            <person name="Sayavedra-Soto L.A."/>
            <person name="Arciero D.M."/>
            <person name="Hommes N.G."/>
            <person name="Whittaker M.M."/>
            <person name="Arp D.J."/>
        </authorList>
    </citation>
    <scope>NUCLEOTIDE SEQUENCE [LARGE SCALE GENOMIC DNA]</scope>
    <source>
        <strain>ATCC 19718 / CIP 103999 / KCTC 2705 / NBRC 14298</strain>
    </source>
</reference>
<gene>
    <name type="ordered locus">NE0210</name>
</gene>
<evidence type="ECO:0000255" key="1">
    <source>
        <dbReference type="HAMAP-Rule" id="MF_00693"/>
    </source>
</evidence>
<name>Y210_NITEU</name>
<keyword id="KW-0963">Cytoplasm</keyword>
<keyword id="KW-0238">DNA-binding</keyword>
<keyword id="KW-1185">Reference proteome</keyword>
<keyword id="KW-0804">Transcription</keyword>
<keyword id="KW-0805">Transcription regulation</keyword>
<proteinExistence type="inferred from homology"/>
<sequence>MAGHSKWANIKHKKAAQDAKRGKIFTRLIKEITVAARLGGGDPNSNPRLRLAMDKAFGHNMPKDNVERAIKRGCGELEGVNYEEIRYEGYGISGAAVMVDCMTDNRTRTVAAVRHAFTKHGGNLGTDGSVAYLFKHCGQLLFAPGVGEAQLLEAALEAGAEDVISNDDGSLEVITGPDTFVSVRDTLEKAGFKAELAEVTWKPENEVLLQGDDAVKMQKLLDALEDIDDVQDVYTSAVLDT</sequence>